<sequence>MSRYRGPRLKKIRRLGALPGLTRKTPKSGSNPKKKFHSGKKEQYRIRLQEKQKLRFHYGLTERQLLRYVYIAGKAKRSTGQVLLQLLEMRLDNILFRLGMASTIPGARQLVNHRHILVNGRIVNIPSFRCKPRDIITTKDNQRSKGLVQNSIASSDPGKLPKHLTIDTLEYKGLVNKILDRKWVGLKINELLVVEY</sequence>
<accession>P36466</accession>
<keyword id="KW-0150">Chloroplast</keyword>
<keyword id="KW-0934">Plastid</keyword>
<keyword id="KW-0687">Ribonucleoprotein</keyword>
<keyword id="KW-0689">Ribosomal protein</keyword>
<keyword id="KW-0694">RNA-binding</keyword>
<keyword id="KW-0699">rRNA-binding</keyword>
<reference key="1">
    <citation type="journal article" date="1994" name="Plant Syst. Evol.">
        <title>The chloroplast gene rps4 as a tool for the study of Poaceae phylogeny.</title>
        <authorList>
            <person name="Nadot S."/>
            <person name="Bajon R."/>
            <person name="Lejeune B."/>
        </authorList>
        <dbReference type="AGRICOLA" id="IND20417698"/>
    </citation>
    <scope>NUCLEOTIDE SEQUENCE [GENOMIC DNA]</scope>
</reference>
<comment type="function">
    <text evidence="1">One of the primary rRNA binding proteins, it binds directly to 16S rRNA where it nucleates assembly of the body of the 30S subunit.</text>
</comment>
<comment type="function">
    <text evidence="1">With S5 and S12 plays an important role in translational accuracy.</text>
</comment>
<comment type="subunit">
    <text evidence="1">Part of the 30S ribosomal subunit. Contacts protein S5. The interaction surface between S4 and S5 is involved in control of translational fidelity (By similarity).</text>
</comment>
<comment type="subcellular location">
    <subcellularLocation>
        <location>Plastid</location>
        <location>Chloroplast</location>
    </subcellularLocation>
</comment>
<comment type="similarity">
    <text evidence="3">Belongs to the universal ribosomal protein uS4 family.</text>
</comment>
<feature type="chain" id="PRO_0000132627" description="Small ribosomal subunit protein uS4c">
    <location>
        <begin position="1"/>
        <end position="196" status="greater than"/>
    </location>
</feature>
<feature type="domain" description="S4 RNA-binding">
    <location>
        <begin position="89"/>
        <end position="169"/>
    </location>
</feature>
<feature type="region of interest" description="Disordered" evidence="2">
    <location>
        <begin position="1"/>
        <end position="43"/>
    </location>
</feature>
<feature type="compositionally biased region" description="Basic residues" evidence="2">
    <location>
        <begin position="1"/>
        <end position="14"/>
    </location>
</feature>
<feature type="non-terminal residue">
    <location>
        <position position="196"/>
    </location>
</feature>
<gene>
    <name type="primary">rps4</name>
</gene>
<organism>
    <name type="scientific">Melica uniflora</name>
    <name type="common">Wood melick grass</name>
    <dbReference type="NCBI Taxonomy" id="29686"/>
    <lineage>
        <taxon>Eukaryota</taxon>
        <taxon>Viridiplantae</taxon>
        <taxon>Streptophyta</taxon>
        <taxon>Embryophyta</taxon>
        <taxon>Tracheophyta</taxon>
        <taxon>Spermatophyta</taxon>
        <taxon>Magnoliopsida</taxon>
        <taxon>Liliopsida</taxon>
        <taxon>Poales</taxon>
        <taxon>Poaceae</taxon>
        <taxon>BOP clade</taxon>
        <taxon>Pooideae</taxon>
        <taxon>Melicodae</taxon>
        <taxon>Meliceae</taxon>
        <taxon>Melica</taxon>
    </lineage>
</organism>
<dbReference type="EMBL" id="Z29246">
    <property type="protein sequence ID" value="CAA82445.1"/>
    <property type="molecule type" value="Genomic_DNA"/>
</dbReference>
<dbReference type="PIR" id="S41275">
    <property type="entry name" value="S41275"/>
</dbReference>
<dbReference type="SMR" id="P36466"/>
<dbReference type="GO" id="GO:0009507">
    <property type="term" value="C:chloroplast"/>
    <property type="evidence" value="ECO:0007669"/>
    <property type="project" value="UniProtKB-SubCell"/>
</dbReference>
<dbReference type="GO" id="GO:0015935">
    <property type="term" value="C:small ribosomal subunit"/>
    <property type="evidence" value="ECO:0007669"/>
    <property type="project" value="InterPro"/>
</dbReference>
<dbReference type="GO" id="GO:0019843">
    <property type="term" value="F:rRNA binding"/>
    <property type="evidence" value="ECO:0007669"/>
    <property type="project" value="UniProtKB-KW"/>
</dbReference>
<dbReference type="GO" id="GO:0003735">
    <property type="term" value="F:structural constituent of ribosome"/>
    <property type="evidence" value="ECO:0007669"/>
    <property type="project" value="InterPro"/>
</dbReference>
<dbReference type="GO" id="GO:0042274">
    <property type="term" value="P:ribosomal small subunit biogenesis"/>
    <property type="evidence" value="ECO:0007669"/>
    <property type="project" value="TreeGrafter"/>
</dbReference>
<dbReference type="GO" id="GO:0006412">
    <property type="term" value="P:translation"/>
    <property type="evidence" value="ECO:0007669"/>
    <property type="project" value="InterPro"/>
</dbReference>
<dbReference type="CDD" id="cd00165">
    <property type="entry name" value="S4"/>
    <property type="match status" value="1"/>
</dbReference>
<dbReference type="FunFam" id="1.10.1050.10:FF:000002">
    <property type="entry name" value="30S ribosomal protein S4, chloroplastic"/>
    <property type="match status" value="1"/>
</dbReference>
<dbReference type="FunFam" id="3.10.290.10:FF:000081">
    <property type="entry name" value="30S ribosomal protein S4, chloroplastic"/>
    <property type="match status" value="1"/>
</dbReference>
<dbReference type="Gene3D" id="1.10.1050.10">
    <property type="entry name" value="Ribosomal Protein S4 Delta 41, Chain A, domain 1"/>
    <property type="match status" value="1"/>
</dbReference>
<dbReference type="Gene3D" id="3.10.290.10">
    <property type="entry name" value="RNA-binding S4 domain"/>
    <property type="match status" value="1"/>
</dbReference>
<dbReference type="HAMAP" id="MF_01306_B">
    <property type="entry name" value="Ribosomal_uS4_B"/>
    <property type="match status" value="1"/>
</dbReference>
<dbReference type="InterPro" id="IPR022801">
    <property type="entry name" value="Ribosomal_uS4"/>
</dbReference>
<dbReference type="InterPro" id="IPR005709">
    <property type="entry name" value="Ribosomal_uS4_bac-type"/>
</dbReference>
<dbReference type="InterPro" id="IPR018079">
    <property type="entry name" value="Ribosomal_uS4_CS"/>
</dbReference>
<dbReference type="InterPro" id="IPR001912">
    <property type="entry name" value="Ribosomal_uS4_N"/>
</dbReference>
<dbReference type="InterPro" id="IPR002942">
    <property type="entry name" value="S4_RNA-bd"/>
</dbReference>
<dbReference type="InterPro" id="IPR036986">
    <property type="entry name" value="S4_RNA-bd_sf"/>
</dbReference>
<dbReference type="NCBIfam" id="NF003717">
    <property type="entry name" value="PRK05327.1"/>
    <property type="match status" value="1"/>
</dbReference>
<dbReference type="NCBIfam" id="TIGR01017">
    <property type="entry name" value="rpsD_bact"/>
    <property type="match status" value="1"/>
</dbReference>
<dbReference type="PANTHER" id="PTHR11831">
    <property type="entry name" value="30S 40S RIBOSOMAL PROTEIN"/>
    <property type="match status" value="1"/>
</dbReference>
<dbReference type="PANTHER" id="PTHR11831:SF4">
    <property type="entry name" value="SMALL RIBOSOMAL SUBUNIT PROTEIN US4M"/>
    <property type="match status" value="1"/>
</dbReference>
<dbReference type="Pfam" id="PF00163">
    <property type="entry name" value="Ribosomal_S4"/>
    <property type="match status" value="1"/>
</dbReference>
<dbReference type="Pfam" id="PF01479">
    <property type="entry name" value="S4"/>
    <property type="match status" value="1"/>
</dbReference>
<dbReference type="SMART" id="SM01390">
    <property type="entry name" value="Ribosomal_S4"/>
    <property type="match status" value="1"/>
</dbReference>
<dbReference type="SMART" id="SM00363">
    <property type="entry name" value="S4"/>
    <property type="match status" value="1"/>
</dbReference>
<dbReference type="SUPFAM" id="SSF55174">
    <property type="entry name" value="Alpha-L RNA-binding motif"/>
    <property type="match status" value="1"/>
</dbReference>
<dbReference type="PROSITE" id="PS00632">
    <property type="entry name" value="RIBOSOMAL_S4"/>
    <property type="match status" value="1"/>
</dbReference>
<dbReference type="PROSITE" id="PS50889">
    <property type="entry name" value="S4"/>
    <property type="match status" value="1"/>
</dbReference>
<geneLocation type="chloroplast"/>
<name>RR4_MELUN</name>
<proteinExistence type="inferred from homology"/>
<protein>
    <recommendedName>
        <fullName evidence="3">Small ribosomal subunit protein uS4c</fullName>
    </recommendedName>
    <alternativeName>
        <fullName>30S ribosomal protein S4, chloroplastic</fullName>
    </alternativeName>
</protein>
<evidence type="ECO:0000250" key="1"/>
<evidence type="ECO:0000256" key="2">
    <source>
        <dbReference type="SAM" id="MobiDB-lite"/>
    </source>
</evidence>
<evidence type="ECO:0000305" key="3"/>